<gene>
    <name evidence="40" type="primary">ISG15</name>
    <name type="synonym">G1P2</name>
    <name type="synonym">UCRP</name>
</gene>
<comment type="function">
    <text evidence="4 7 8 9 10 11 12 15 16 17 18 19 20 22 23 24 25 29 30 32 33 35 36">Ubiquitin-like protein which plays a key role in the innate immune response to viral infection either via its conjugation to a target protein (ISGylation) or via its action as a free or unconjugated protein (PubMed:27564865, PubMed:39465252). ISGylation involves a cascade of enzymatic reactions involving E1, E2, and E3 enzymes which catalyze the conjugation of ISG15 to a lysine residue in the target protein (PubMed:33727702). Its target proteins include IFIT1, MX1/MxA, PPM1B, UBE2L6, UBA7, CHMP5, CHMP2A, CHMP4B and CHMP6. Isgylation of the viral sensor IFIH1/MDA5 promotes IFIH1/MDA5 oligomerization and triggers activation of innate immunity against a range of viruses, including coronaviruses, flaviviruses and picornaviruses (PubMed:33727702). Can also isgylate: EIF2AK2/PKR which results in its activation, RIGI which inhibits its function in antiviral signaling response, EIF4E2 which enhances its cap structure-binding activity and translation-inhibition activity, UBE2N and UBE2E1 which negatively regulates their activity, IRF3 which inhibits its ubiquitination and degradation and FLNB which prevents its ability to interact with the upstream activators of the JNK cascade thereby inhibiting IFNA-induced JNK signaling. Exhibits antiviral activity towards both DNA and RNA viruses, including influenza A, HIV-1 and Ebola virus. Restricts HIV-1 and ebola virus via disruption of viral budding. Inhibits the ubiquitination of HIV-1 Gag and host TSG101 and disrupts their interaction, thereby preventing assembly and release of virions from infected cells. Inhibits Ebola virus budding mediated by the VP40 protein by disrupting ubiquitin ligase activity of NEDD4 and its ability to ubiquitinate VP40. ISGylates influenza A virus NS1 protein which causes a loss of function of the protein and the inhibition of virus replication. The secreted form of ISG15 can: induce natural killer cell proliferation, act as a chemotactic factor for neutrophils and act as a IFN-gamma-inducing cytokine playing an essential role in antimycobacterial immunity. The secreted form acts through the integrin ITGAL/ITGB2 receptor to initiate activation of SRC family tyrosine kinases including LYN, HCK and FGR which leads to secretion of IFNG and IL10; the interaction is mediated by ITGAL (PubMed:29100055).</text>
</comment>
<comment type="subunit">
    <text evidence="3 5 12 27 33">Homodimer; disulfide-linked (PubMed:2440890). Interacts with, and is conjugated to its targets by UBE1L (E1 enzyme) and UBE2E2 (E2 enzyme) (PubMed:11157743, PubMed:15131269). Interacts with NEDD4 (PubMed:18305167). Interacts with PARP12; this interaction inhibits PINK1/Parkin-dependent mitophagy (PubMed:39465252).</text>
</comment>
<comment type="subunit">
    <text evidence="26">(Microbial infection) Interacts with vaccinia virus protein E3.</text>
</comment>
<comment type="subunit">
    <text evidence="3">(Microbial infection) Interaction with influenza B NS1 protein inhibits its conjugation.</text>
</comment>
<comment type="subunit">
    <text evidence="21">(Microbial infection) Interacts (via C-terminus) with Crimean-Congo hemorrhagic fever virus (CCHFV) RNA-directed RNA polymerase L (via N-terminus); the deISGylase activity of the viral protein interferes with antiviral signaling pathways mediated by NF-kappaB and IRF signalings.</text>
</comment>
<comment type="subunit">
    <text evidence="29">(Microbial infection) Interacts with human cytomegalovirus protein UL26; this interaction inhibits global protein ISGylation.</text>
</comment>
<comment type="interaction">
    <interactant intactId="EBI-746466">
        <id>P05161</id>
    </interactant>
    <interactant intactId="EBI-352089">
        <id>O75369</id>
        <label>FLNB</label>
    </interactant>
    <organismsDiffer>false</organismsDiffer>
    <experiments>4</experiments>
</comment>
<comment type="interaction">
    <interactant intactId="EBI-746466">
        <id>P05161</id>
    </interactant>
    <interactant intactId="EBI-6115771">
        <id>Q9BYX4</id>
        <label>IFIH1</label>
    </interactant>
    <organismsDiffer>false</organismsDiffer>
    <experiments>7</experiments>
</comment>
<comment type="interaction">
    <interactant intactId="EBI-746466">
        <id>P05161</id>
    </interactant>
    <interactant intactId="EBI-4394437">
        <id>P05000</id>
        <label>IFNW1</label>
    </interactant>
    <organismsDiffer>false</organismsDiffer>
    <experiments>2</experiments>
</comment>
<comment type="interaction">
    <interactant intactId="EBI-746466">
        <id>P05161</id>
    </interactant>
    <interactant intactId="EBI-2650369">
        <id>Q14653</id>
        <label>IRF3</label>
    </interactant>
    <organismsDiffer>false</organismsDiffer>
    <experiments>2</experiments>
</comment>
<comment type="interaction">
    <interactant intactId="EBI-746466">
        <id>P05161</id>
    </interactant>
    <interactant intactId="EBI-1047039">
        <id>O75688</id>
        <label>PPM1B</label>
    </interactant>
    <organismsDiffer>false</organismsDiffer>
    <experiments>2</experiments>
</comment>
<comment type="interaction">
    <interactant intactId="EBI-746466">
        <id>P05161</id>
    </interactant>
    <interactant intactId="EBI-21251460">
        <id>O60260-5</id>
        <label>PRKN</label>
    </interactant>
    <organismsDiffer>false</organismsDiffer>
    <experiments>3</experiments>
</comment>
<comment type="interaction">
    <interactant intactId="EBI-746466">
        <id>P05161</id>
    </interactant>
    <interactant intactId="EBI-751921">
        <id>P41226</id>
        <label>UBA7</label>
    </interactant>
    <organismsDiffer>false</organismsDiffer>
    <experiments>12</experiments>
</comment>
<comment type="interaction">
    <interactant intactId="EBI-746466">
        <id>P05161</id>
    </interactant>
    <interactant intactId="EBI-356206">
        <id>Q9UMW8</id>
        <label>USP18</label>
    </interactant>
    <organismsDiffer>false</organismsDiffer>
    <experiments>9</experiments>
</comment>
<comment type="interaction">
    <interactant intactId="EBI-746466">
        <id>P05161</id>
    </interactant>
    <interactant intactId="EBI-25635190">
        <id>PRO_0000338257</id>
        <label>1a</label>
        <dbReference type="UniProtKB" id="P0C6U8"/>
    </interactant>
    <organismsDiffer>true</organismsDiffer>
    <experiments>5</experiments>
</comment>
<comment type="interaction">
    <interactant intactId="EBI-746466">
        <id>P05161</id>
    </interactant>
    <interactant intactId="EBI-4403908">
        <id>Q6TQR6</id>
        <label>L</label>
    </interactant>
    <organismsDiffer>true</organismsDiffer>
    <experiments>5</experiments>
</comment>
<comment type="interaction">
    <interactant intactId="EBI-746466">
        <id>P05161</id>
    </interactant>
    <interactant intactId="EBI-2548993">
        <id>P03495</id>
        <label>NS</label>
    </interactant>
    <organismsDiffer>true</organismsDiffer>
    <experiments>4</experiments>
</comment>
<comment type="interaction">
    <interactant intactId="EBI-746466">
        <id>P05161</id>
    </interactant>
    <interactant intactId="EBI-15938710">
        <id>P03502</id>
        <label>NS</label>
    </interactant>
    <organismsDiffer>true</organismsDiffer>
    <experiments>4</experiments>
</comment>
<comment type="interaction">
    <interactant intactId="EBI-746466">
        <id>P05161</id>
    </interactant>
    <interactant intactId="EBI-25565992">
        <id>K0BWD0</id>
        <label>orf1ab</label>
    </interactant>
    <organismsDiffer>true</organismsDiffer>
    <experiments>4</experiments>
</comment>
<comment type="interaction">
    <interactant intactId="EBI-746466">
        <id>P05161</id>
    </interactant>
    <interactant intactId="EBI-25592237">
        <id>PRO_0000422441</id>
        <label>rep</label>
        <dbReference type="UniProtKB" id="K9N7C7"/>
    </interactant>
    <organismsDiffer>true</organismsDiffer>
    <experiments>4</experiments>
</comment>
<comment type="interaction">
    <interactant intactId="EBI-746466">
        <id>P05161</id>
    </interactant>
    <interactant intactId="EBI-25474079">
        <id>PRO_0000037311</id>
        <label>rep</label>
        <dbReference type="UniProtKB" id="P0C6X7"/>
    </interactant>
    <organismsDiffer>true</organismsDiffer>
    <experiments>2</experiments>
</comment>
<comment type="interaction">
    <interactant intactId="EBI-746466">
        <id>P05161</id>
    </interactant>
    <interactant intactId="EBI-25492388">
        <id>PRO_0000449621</id>
        <label>rep</label>
        <dbReference type="UniProtKB" id="P0DTD1"/>
    </interactant>
    <organismsDiffer>true</organismsDiffer>
    <experiments>13</experiments>
</comment>
<comment type="subcellular location">
    <subcellularLocation>
        <location evidence="24 33">Cytoplasm</location>
    </subcellularLocation>
    <subcellularLocation>
        <location evidence="24">Secreted</location>
    </subcellularLocation>
    <text>Exists in three distinct states: free within the cell, released into the extracellular space, or conjugated to target proteins.</text>
</comment>
<comment type="tissue specificity">
    <text evidence="24 34">Detected in lymphoid cells, striated and smooth muscle, several epithelia and neurons. Expressed in neutrophils, monocytes and lymphocytes. Enhanced expression seen in pancreatic adenocarcinoma, endometrial cancer, and bladder cancer, as compared to non-cancerous tissue. In bladder cancer, the increase in expression exhibits a striking positive correlation with more advanced stages of the disease.</text>
</comment>
<comment type="induction">
    <text evidence="24">Strongly induced upon exposure to type I interferons, viruses, LPS, and other stresses, including certain genotoxic stresses.</text>
</comment>
<comment type="domain">
    <text evidence="13">Both the Ubiquitin-like 1 and Ubiquitin-like 2 domains are required for its efficient conjugation to cellular proteins. The two domains play different roles in the ISGylation pathway: Ubiquitin-like 2 domain is necessary for the first two steps allowing the linking of ISG15 to the E1 and E2 enzymes while Ubiquitin-like 1 domain is essential for the final, E3-mediated transfer of ISG15, from the E2 to the Lys of the target protein (PubMed:18356159).</text>
</comment>
<comment type="PTM">
    <text evidence="14">S-nitrosylation decreases its dimerization, thereby increasing the availability as well as the solubility of monomeric ISG15 for its conjugation to cellular proteins.</text>
</comment>
<comment type="PTM">
    <text evidence="28 31">Induced as an inactive, precursor protein that is cleaved by specific proteases to expose the C-terminal diglycine (LRLRGG) motif. This motif is essential not only for its conjugation to substrates but also for its recognition by the relevant processing proteases.</text>
</comment>
<comment type="disease" evidence="24">
    <disease id="DI-04280">
        <name>Immunodeficiency 38, with basal ganglia calcification</name>
        <acronym>IMD38</acronym>
        <description>A primary immunodeficiency predisposing individuals to severe clinical disease upon infection with weakly virulent mycobacteria, including Mycobacterium bovis Bacille Calmette-Guerin (BCG) vaccines. Patients are also susceptible to Salmonella and Mycobacterium tuberculosis infections. Affected individuals have intracranial calcification.</description>
        <dbReference type="MIM" id="616126"/>
    </disease>
    <text>The disease is caused by variants affecting the gene represented in this entry.</text>
</comment>
<comment type="online information" name="Protein Spotlight">
    <link uri="https://www.proteinspotlight.org/back_issues/234/"/>
    <text>On guard - Issue 240 of October 2021</text>
</comment>
<feature type="initiator methionine" description="Removed" evidence="28">
    <location>
        <position position="1"/>
    </location>
</feature>
<feature type="chain" id="PRO_0000035986" description="Ubiquitin-like protein ISG15">
    <location>
        <begin position="2"/>
        <end position="157"/>
    </location>
</feature>
<feature type="propeptide" id="PRO_0000035987" description="Removed in mature form">
    <location>
        <begin position="158"/>
        <end position="165"/>
    </location>
</feature>
<feature type="domain" description="Ubiquitin-like 1" evidence="2">
    <location>
        <begin position="2"/>
        <end position="78"/>
    </location>
</feature>
<feature type="domain" description="Ubiquitin-like 2" evidence="2">
    <location>
        <begin position="79"/>
        <end position="157"/>
    </location>
</feature>
<feature type="region of interest" description="Involved in the ligation of specific target proteins" evidence="1">
    <location>
        <begin position="153"/>
        <end position="157"/>
    </location>
</feature>
<feature type="short sequence motif" description="LRLRGG">
    <location>
        <begin position="152"/>
        <end position="157"/>
    </location>
</feature>
<feature type="site" description="Interacts with activating enzyme" evidence="1">
    <location>
        <position position="153"/>
    </location>
</feature>
<feature type="modified residue" description="S-nitrosocysteine; alternate" evidence="14">
    <location>
        <position position="78"/>
    </location>
</feature>
<feature type="disulfide bond" description="Interchain (with C-87 in UBE2N); alternate" evidence="23">
    <location>
        <position position="78"/>
    </location>
</feature>
<feature type="cross-link" description="Glycyl lysine isopeptide (Gly-Lys) (interchain with K-? in acceptor proteins)" evidence="2">
    <location>
        <position position="157"/>
    </location>
</feature>
<feature type="sequence variant" id="VAR_016181" description="In dbSNP:rs1921." evidence="6 37 38">
    <original>S</original>
    <variation>N</variation>
    <location>
        <position position="83"/>
    </location>
</feature>
<feature type="mutagenesis site" description="Does not affect ISG15 signaling, interaction with ITGAL or activation of SRC family tyrosine kinases." evidence="30">
    <original>R</original>
    <variation>A</variation>
    <location>
        <position position="44"/>
    </location>
</feature>
<feature type="mutagenesis site" description="Does not affect ISG15 signaling, interaction with ITGAL or activation of SRC family tyrosine kinases." evidence="30">
    <original>S</original>
    <variation>A</variation>
    <location>
        <position position="83"/>
    </location>
</feature>
<feature type="mutagenesis site" description="Reduces ISG15 signaling. Strongly reduces ISG15 signaling and abolishes interaction with ITGAL and activation of SRC family tyrosine kinases; when associated with D-102." evidence="30">
    <original>Y</original>
    <variation>L</variation>
    <location>
        <position position="96"/>
    </location>
</feature>
<feature type="mutagenesis site" description="Strongly reduces ISG15 signaling and abolishes interaction with ITGAL." evidence="30">
    <original>R</original>
    <variation>A</variation>
    <location>
        <position position="99"/>
    </location>
</feature>
<feature type="mutagenesis site" description="Strongly reduces ISG15 signaling and abolishes interaction with ITGAL and activation of SRC family tyrosine kinases." evidence="30">
    <original>T</original>
    <variation>A</variation>
    <location>
        <position position="101"/>
    </location>
</feature>
<feature type="mutagenesis site" description="Reduces ISG15 signaling. Strongly reduces ISG15 signaling and abolishes interaction with ITGAL and activation of SRC family tyrosine kinases; when associated with L-96." evidence="30">
    <original>Q</original>
    <variation>D</variation>
    <location>
        <position position="102"/>
    </location>
</feature>
<feature type="mutagenesis site" description="Strongly reduces ISG15 signaling and abolishes interaction with ITGAL." evidence="30">
    <original>T</original>
    <variation>A</variation>
    <location>
        <position position="103"/>
    </location>
</feature>
<feature type="sequence conflict" description="In Ref. 2; AAA36128." evidence="39" ref="2">
    <original>K</original>
    <variation>N</variation>
    <location>
        <position position="35"/>
    </location>
</feature>
<feature type="strand" evidence="41">
    <location>
        <begin position="4"/>
        <end position="9"/>
    </location>
</feature>
<feature type="strand" evidence="43">
    <location>
        <begin position="10"/>
        <end position="12"/>
    </location>
</feature>
<feature type="strand" evidence="41">
    <location>
        <begin position="14"/>
        <end position="18"/>
    </location>
</feature>
<feature type="strand" evidence="43">
    <location>
        <begin position="20"/>
        <end position="22"/>
    </location>
</feature>
<feature type="helix" evidence="41">
    <location>
        <begin position="25"/>
        <end position="36"/>
    </location>
</feature>
<feature type="helix" evidence="41">
    <location>
        <begin position="40"/>
        <end position="42"/>
    </location>
</feature>
<feature type="strand" evidence="41">
    <location>
        <begin position="43"/>
        <end position="48"/>
    </location>
</feature>
<feature type="strand" evidence="45">
    <location>
        <begin position="56"/>
        <end position="58"/>
    </location>
</feature>
<feature type="helix" evidence="41">
    <location>
        <begin position="60"/>
        <end position="63"/>
    </location>
</feature>
<feature type="strand" evidence="43">
    <location>
        <begin position="66"/>
        <end position="68"/>
    </location>
</feature>
<feature type="strand" evidence="41">
    <location>
        <begin position="70"/>
        <end position="75"/>
    </location>
</feature>
<feature type="strand" evidence="44">
    <location>
        <begin position="82"/>
        <end position="87"/>
    </location>
</feature>
<feature type="turn" evidence="47">
    <location>
        <begin position="89"/>
        <end position="91"/>
    </location>
</feature>
<feature type="strand" evidence="44">
    <location>
        <begin position="93"/>
        <end position="98"/>
    </location>
</feature>
<feature type="strand" evidence="46">
    <location>
        <begin position="100"/>
        <end position="103"/>
    </location>
</feature>
<feature type="helix" evidence="44">
    <location>
        <begin position="104"/>
        <end position="115"/>
    </location>
</feature>
<feature type="helix" evidence="44">
    <location>
        <begin position="119"/>
        <end position="121"/>
    </location>
</feature>
<feature type="strand" evidence="44">
    <location>
        <begin position="122"/>
        <end position="126"/>
    </location>
</feature>
<feature type="strand" evidence="42">
    <location>
        <begin position="129"/>
        <end position="131"/>
    </location>
</feature>
<feature type="strand" evidence="46">
    <location>
        <begin position="133"/>
        <end position="136"/>
    </location>
</feature>
<feature type="helix" evidence="44">
    <location>
        <begin position="137"/>
        <end position="140"/>
    </location>
</feature>
<feature type="strand" evidence="44">
    <location>
        <begin position="147"/>
        <end position="152"/>
    </location>
</feature>
<keyword id="KW-0002">3D-structure</keyword>
<keyword id="KW-0051">Antiviral defense</keyword>
<keyword id="KW-0963">Cytoplasm</keyword>
<keyword id="KW-0903">Direct protein sequencing</keyword>
<keyword id="KW-1015">Disulfide bond</keyword>
<keyword id="KW-0945">Host-virus interaction</keyword>
<keyword id="KW-0391">Immunity</keyword>
<keyword id="KW-0399">Innate immunity</keyword>
<keyword id="KW-1017">Isopeptide bond</keyword>
<keyword id="KW-1267">Proteomics identification</keyword>
<keyword id="KW-1185">Reference proteome</keyword>
<keyword id="KW-0677">Repeat</keyword>
<keyword id="KW-0702">S-nitrosylation</keyword>
<keyword id="KW-0964">Secreted</keyword>
<keyword id="KW-0833">Ubl conjugation pathway</keyword>
<name>ISG15_HUMAN</name>
<accession>P05161</accession>
<accession>Q5SVA4</accession>
<accession>Q7Z2G2</accession>
<accession>Q96GF0</accession>
<reference key="1">
    <citation type="journal article" date="1986" name="J. Biol. Chem.">
        <title>Molecular characterization of the interferon-induced 15-kDa protein. Molecular cloning and nucleotide and amino acid sequence.</title>
        <authorList>
            <person name="Blomstrom D.C."/>
            <person name="Fahey D."/>
            <person name="Kutny R."/>
            <person name="Korant B.D."/>
            <person name="Knight E. Jr."/>
        </authorList>
    </citation>
    <scope>NUCLEOTIDE SEQUENCE [MRNA]</scope>
</reference>
<reference key="2">
    <citation type="journal article" date="1987" name="Proc. Natl. Acad. Sci. U.S.A.">
        <title>Interferon-induced transcription of a gene encoding a 15-kDa protein depends on an upstream enhancer element.</title>
        <authorList>
            <person name="Reich N."/>
            <person name="Evans B."/>
            <person name="Levy D."/>
            <person name="Fahey D."/>
            <person name="Knight E. Jr."/>
            <person name="Darnell J.E. Jr."/>
        </authorList>
    </citation>
    <scope>NUCLEOTIDE SEQUENCE [GENOMIC DNA]</scope>
</reference>
<reference key="3">
    <citation type="journal article" date="1988" name="J. Biol. Chem.">
        <title>A 15-kDa interferon-induced protein is derived by COOH-terminal processing of a 17-kDa precursor.</title>
        <authorList>
            <person name="Knight E. Jr."/>
            <person name="Fahey D."/>
            <person name="Cordova B."/>
            <person name="Hillman M. Jr."/>
            <person name="Kutny R."/>
            <person name="Reich N."/>
            <person name="Blomstrom D.C."/>
        </authorList>
    </citation>
    <scope>NUCLEOTIDE SEQUENCE [MRNA]</scope>
    <scope>PROTEOLYTIC PROCESSING</scope>
</reference>
<reference key="4">
    <citation type="journal article" date="1988" name="J. Biol. Chem.">
        <authorList>
            <person name="Knight E. Jr."/>
            <person name="Fahey D."/>
            <person name="Cordova B."/>
            <person name="Hillman M. Jr."/>
            <person name="Kutny R."/>
            <person name="Reich N."/>
            <person name="Blomstrom D.C."/>
        </authorList>
    </citation>
    <scope>ERRATUM OF PUBMED:3350799</scope>
</reference>
<reference key="5">
    <citation type="submission" date="2002-10" db="EMBL/GenBank/DDBJ databases">
        <title>Conjugation by ubiquitin-like proteins.</title>
        <authorList>
            <person name="Kamitani T."/>
            <person name="Fukuda-Kamitani T."/>
        </authorList>
    </citation>
    <scope>NUCLEOTIDE SEQUENCE [MRNA]</scope>
    <scope>VARIANT ASN-83</scope>
    <source>
        <tissue>Testis</tissue>
    </source>
</reference>
<reference key="6">
    <citation type="submission" date="2003-05" db="EMBL/GenBank/DDBJ databases">
        <title>Cloning of human full-length CDSs in BD Creator(TM) system donor vector.</title>
        <authorList>
            <person name="Kalnine N."/>
            <person name="Chen X."/>
            <person name="Rolfs A."/>
            <person name="Halleck A."/>
            <person name="Hines L."/>
            <person name="Eisenstein S."/>
            <person name="Koundinya M."/>
            <person name="Raphael J."/>
            <person name="Moreira D."/>
            <person name="Kelley T."/>
            <person name="LaBaer J."/>
            <person name="Lin Y."/>
            <person name="Phelan M."/>
            <person name="Farmer A."/>
        </authorList>
    </citation>
    <scope>NUCLEOTIDE SEQUENCE [LARGE SCALE MRNA]</scope>
    <scope>VARIANT ASN-83</scope>
</reference>
<reference key="7">
    <citation type="journal article" date="2006" name="Nature">
        <title>The DNA sequence and biological annotation of human chromosome 1.</title>
        <authorList>
            <person name="Gregory S.G."/>
            <person name="Barlow K.F."/>
            <person name="McLay K.E."/>
            <person name="Kaul R."/>
            <person name="Swarbreck D."/>
            <person name="Dunham A."/>
            <person name="Scott C.E."/>
            <person name="Howe K.L."/>
            <person name="Woodfine K."/>
            <person name="Spencer C.C.A."/>
            <person name="Jones M.C."/>
            <person name="Gillson C."/>
            <person name="Searle S."/>
            <person name="Zhou Y."/>
            <person name="Kokocinski F."/>
            <person name="McDonald L."/>
            <person name="Evans R."/>
            <person name="Phillips K."/>
            <person name="Atkinson A."/>
            <person name="Cooper R."/>
            <person name="Jones C."/>
            <person name="Hall R.E."/>
            <person name="Andrews T.D."/>
            <person name="Lloyd C."/>
            <person name="Ainscough R."/>
            <person name="Almeida J.P."/>
            <person name="Ambrose K.D."/>
            <person name="Anderson F."/>
            <person name="Andrew R.W."/>
            <person name="Ashwell R.I.S."/>
            <person name="Aubin K."/>
            <person name="Babbage A.K."/>
            <person name="Bagguley C.L."/>
            <person name="Bailey J."/>
            <person name="Beasley H."/>
            <person name="Bethel G."/>
            <person name="Bird C.P."/>
            <person name="Bray-Allen S."/>
            <person name="Brown J.Y."/>
            <person name="Brown A.J."/>
            <person name="Buckley D."/>
            <person name="Burton J."/>
            <person name="Bye J."/>
            <person name="Carder C."/>
            <person name="Chapman J.C."/>
            <person name="Clark S.Y."/>
            <person name="Clarke G."/>
            <person name="Clee C."/>
            <person name="Cobley V."/>
            <person name="Collier R.E."/>
            <person name="Corby N."/>
            <person name="Coville G.J."/>
            <person name="Davies J."/>
            <person name="Deadman R."/>
            <person name="Dunn M."/>
            <person name="Earthrowl M."/>
            <person name="Ellington A.G."/>
            <person name="Errington H."/>
            <person name="Frankish A."/>
            <person name="Frankland J."/>
            <person name="French L."/>
            <person name="Garner P."/>
            <person name="Garnett J."/>
            <person name="Gay L."/>
            <person name="Ghori M.R.J."/>
            <person name="Gibson R."/>
            <person name="Gilby L.M."/>
            <person name="Gillett W."/>
            <person name="Glithero R.J."/>
            <person name="Grafham D.V."/>
            <person name="Griffiths C."/>
            <person name="Griffiths-Jones S."/>
            <person name="Grocock R."/>
            <person name="Hammond S."/>
            <person name="Harrison E.S.I."/>
            <person name="Hart E."/>
            <person name="Haugen E."/>
            <person name="Heath P.D."/>
            <person name="Holmes S."/>
            <person name="Holt K."/>
            <person name="Howden P.J."/>
            <person name="Hunt A.R."/>
            <person name="Hunt S.E."/>
            <person name="Hunter G."/>
            <person name="Isherwood J."/>
            <person name="James R."/>
            <person name="Johnson C."/>
            <person name="Johnson D."/>
            <person name="Joy A."/>
            <person name="Kay M."/>
            <person name="Kershaw J.K."/>
            <person name="Kibukawa M."/>
            <person name="Kimberley A.M."/>
            <person name="King A."/>
            <person name="Knights A.J."/>
            <person name="Lad H."/>
            <person name="Laird G."/>
            <person name="Lawlor S."/>
            <person name="Leongamornlert D.A."/>
            <person name="Lloyd D.M."/>
            <person name="Loveland J."/>
            <person name="Lovell J."/>
            <person name="Lush M.J."/>
            <person name="Lyne R."/>
            <person name="Martin S."/>
            <person name="Mashreghi-Mohammadi M."/>
            <person name="Matthews L."/>
            <person name="Matthews N.S.W."/>
            <person name="McLaren S."/>
            <person name="Milne S."/>
            <person name="Mistry S."/>
            <person name="Moore M.J.F."/>
            <person name="Nickerson T."/>
            <person name="O'Dell C.N."/>
            <person name="Oliver K."/>
            <person name="Palmeiri A."/>
            <person name="Palmer S.A."/>
            <person name="Parker A."/>
            <person name="Patel D."/>
            <person name="Pearce A.V."/>
            <person name="Peck A.I."/>
            <person name="Pelan S."/>
            <person name="Phelps K."/>
            <person name="Phillimore B.J."/>
            <person name="Plumb R."/>
            <person name="Rajan J."/>
            <person name="Raymond C."/>
            <person name="Rouse G."/>
            <person name="Saenphimmachak C."/>
            <person name="Sehra H.K."/>
            <person name="Sheridan E."/>
            <person name="Shownkeen R."/>
            <person name="Sims S."/>
            <person name="Skuce C.D."/>
            <person name="Smith M."/>
            <person name="Steward C."/>
            <person name="Subramanian S."/>
            <person name="Sycamore N."/>
            <person name="Tracey A."/>
            <person name="Tromans A."/>
            <person name="Van Helmond Z."/>
            <person name="Wall M."/>
            <person name="Wallis J.M."/>
            <person name="White S."/>
            <person name="Whitehead S.L."/>
            <person name="Wilkinson J.E."/>
            <person name="Willey D.L."/>
            <person name="Williams H."/>
            <person name="Wilming L."/>
            <person name="Wray P.W."/>
            <person name="Wu Z."/>
            <person name="Coulson A."/>
            <person name="Vaudin M."/>
            <person name="Sulston J.E."/>
            <person name="Durbin R.M."/>
            <person name="Hubbard T."/>
            <person name="Wooster R."/>
            <person name="Dunham I."/>
            <person name="Carter N.P."/>
            <person name="McVean G."/>
            <person name="Ross M.T."/>
            <person name="Harrow J."/>
            <person name="Olson M.V."/>
            <person name="Beck S."/>
            <person name="Rogers J."/>
            <person name="Bentley D.R."/>
        </authorList>
    </citation>
    <scope>NUCLEOTIDE SEQUENCE [LARGE SCALE GENOMIC DNA]</scope>
</reference>
<reference key="8">
    <citation type="submission" date="2005-07" db="EMBL/GenBank/DDBJ databases">
        <authorList>
            <person name="Mural R.J."/>
            <person name="Istrail S."/>
            <person name="Sutton G.G."/>
            <person name="Florea L."/>
            <person name="Halpern A.L."/>
            <person name="Mobarry C.M."/>
            <person name="Lippert R."/>
            <person name="Walenz B."/>
            <person name="Shatkay H."/>
            <person name="Dew I."/>
            <person name="Miller J.R."/>
            <person name="Flanigan M.J."/>
            <person name="Edwards N.J."/>
            <person name="Bolanos R."/>
            <person name="Fasulo D."/>
            <person name="Halldorsson B.V."/>
            <person name="Hannenhalli S."/>
            <person name="Turner R."/>
            <person name="Yooseph S."/>
            <person name="Lu F."/>
            <person name="Nusskern D.R."/>
            <person name="Shue B.C."/>
            <person name="Zheng X.H."/>
            <person name="Zhong F."/>
            <person name="Delcher A.L."/>
            <person name="Huson D.H."/>
            <person name="Kravitz S.A."/>
            <person name="Mouchard L."/>
            <person name="Reinert K."/>
            <person name="Remington K.A."/>
            <person name="Clark A.G."/>
            <person name="Waterman M.S."/>
            <person name="Eichler E.E."/>
            <person name="Adams M.D."/>
            <person name="Hunkapiller M.W."/>
            <person name="Myers E.W."/>
            <person name="Venter J.C."/>
        </authorList>
    </citation>
    <scope>NUCLEOTIDE SEQUENCE [LARGE SCALE GENOMIC DNA]</scope>
</reference>
<reference key="9">
    <citation type="journal article" date="2004" name="Genome Res.">
        <title>The status, quality, and expansion of the NIH full-length cDNA project: the Mammalian Gene Collection (MGC).</title>
        <authorList>
            <consortium name="The MGC Project Team"/>
        </authorList>
    </citation>
    <scope>NUCLEOTIDE SEQUENCE [LARGE SCALE MRNA]</scope>
    <scope>VARIANT ASN-83</scope>
    <source>
        <tissue>Colon</tissue>
    </source>
</reference>
<reference key="10">
    <citation type="journal article" date="1989" name="J. Interferon Res.">
        <title>A 15-kD interferon-induced protein and its 17-kD precursor: expression in Escherichia coli, purification, and characterization.</title>
        <authorList>
            <person name="Feltham N."/>
            <person name="Hillman M. Jr."/>
            <person name="Cordova B."/>
            <person name="Fahey D."/>
            <person name="Larsen B."/>
            <person name="Blomstrom D.C."/>
            <person name="Knight E. Jr."/>
        </authorList>
    </citation>
    <scope>PROTEIN SEQUENCE OF 2-38 AND 151-165</scope>
    <scope>PROTEOLYTIC PROCESSING</scope>
</reference>
<reference key="11">
    <citation type="journal article" date="1987" name="J. Biol. Chem.">
        <title>Interferon induces a 15-kilodalton protein exhibiting marked homology to ubiquitin.</title>
        <authorList>
            <person name="Haas A.L."/>
            <person name="Ahrens P."/>
            <person name="Bright P.M."/>
            <person name="Ankel H."/>
        </authorList>
    </citation>
    <scope>SIMILARITY TO UBIQUITIN</scope>
</reference>
<reference key="12">
    <citation type="journal article" date="1992" name="J. Biol. Chem.">
        <title>The interferon-inducible 15-kDa ubiquitin homolog conjugates to intracellular proteins.</title>
        <authorList>
            <person name="Loeb K.R."/>
            <person name="Haas A.L."/>
        </authorList>
    </citation>
    <scope>FUNCTION</scope>
</reference>
<reference key="13">
    <citation type="journal article" date="1994" name="Mol. Cell. Biol.">
        <title>Conjugates of ubiquitin cross-reactive protein distribute in a cytoskeletal pattern.</title>
        <authorList>
            <person name="Loeb K.R."/>
            <person name="Haas A.L."/>
        </authorList>
    </citation>
    <scope>FUNCTION</scope>
</reference>
<reference key="14">
    <citation type="journal article" date="1996" name="J. Biol. Chem.">
        <title>Conjugation of the 15-kDa interferon-induced ubiquitin homolog is distinct from that of ubiquitin.</title>
        <authorList>
            <person name="Narasimhan J."/>
            <person name="Potter J.L."/>
            <person name="Haas A.L."/>
        </authorList>
    </citation>
    <scope>FUNCTION</scope>
</reference>
<reference key="15">
    <citation type="journal article" date="1991" name="J. Immunol.">
        <title>IFN-induced 15-kDa protein is released from human lymphocytes and monocytes.</title>
        <authorList>
            <person name="Knight E. Jr."/>
            <person name="Cordova B."/>
        </authorList>
    </citation>
    <scope>FUNCTION</scope>
</reference>
<reference key="16">
    <citation type="journal article" date="1995" name="J. Pathol.">
        <title>Immunohistochemical localization of ubiquitin cross-reactive protein in human tissues.</title>
        <authorList>
            <person name="Lowe J."/>
            <person name="McDermott H."/>
            <person name="Loeb K."/>
            <person name="Landon M."/>
            <person name="Haas A.L."/>
            <person name="Mayer R.J."/>
        </authorList>
    </citation>
    <scope>TISSUE SPECIFICITY</scope>
</reference>
<reference key="17">
    <citation type="journal article" date="2001" name="EMBO J.">
        <title>Influenza B virus NS1 protein inhibits conjugation of the interferon (IFN)-induced ubiquitin-like ISG15 protein.</title>
        <authorList>
            <person name="Yuan W."/>
            <person name="Krug R.M."/>
        </authorList>
    </citation>
    <scope>INTERACTION WITH UBE1L AND INFLUENZA B NS1</scope>
</reference>
<reference key="18">
    <citation type="journal article" date="2002" name="J. Biol. Chem.">
        <title>UBP43 (USP18) specifically removes ISG15 from conjugated proteins.</title>
        <authorList>
            <person name="Malakhov M.P."/>
            <person name="Malakhova O.A."/>
            <person name="Kim K.I."/>
            <person name="Ritchie K.J."/>
            <person name="Zhang D.-E."/>
        </authorList>
    </citation>
    <scope>CHARACTERIZATION</scope>
</reference>
<reference key="19">
    <citation type="journal article" date="2004" name="Proc. Natl. Acad. Sci. U.S.A.">
        <title>The UbcH8 ubiquitin E2 enzyme is also the E2 enzyme for ISG15, an IFN-alpha/beta-induced ubiquitin-like protein.</title>
        <authorList>
            <person name="Zhao C."/>
            <person name="Beaudenon S.L."/>
            <person name="Kelley M.L."/>
            <person name="Waddell M.B."/>
            <person name="Yuan W."/>
            <person name="Schulman B.A."/>
            <person name="Huibregtse J.M."/>
            <person name="Krug R.M."/>
        </authorList>
    </citation>
    <scope>INTERACTION WITH UBE2E2</scope>
</reference>
<reference key="20">
    <citation type="journal article" date="2005" name="Biochem. Biophys. Res. Commun.">
        <title>ISG15 modification of Ubc13 suppresses its ubiquitin-conjugating activity.</title>
        <authorList>
            <person name="Takeuchi T."/>
            <person name="Yokosawa H."/>
        </authorList>
    </citation>
    <scope>FUNCTION IN UBE2N ISGYLATION</scope>
</reference>
<reference key="21">
    <citation type="journal article" date="2005" name="J. Biochem.">
        <title>Link between the ubiquitin conjugation system and the ISG15 conjugation system: ISG15 conjugation to the UbcH6 ubiquitin E2 enzyme.</title>
        <authorList>
            <person name="Takeuchi T."/>
            <person name="Iwahara S."/>
            <person name="Saeki Y."/>
            <person name="Sasajima H."/>
            <person name="Yokosawa H."/>
        </authorList>
    </citation>
    <scope>FUNCTION IN UBE2E1 AND UBE2L6 ISGYLATION</scope>
</reference>
<reference key="22">
    <citation type="journal article" date="2005" name="Proc. Natl. Acad. Sci. U.S.A.">
        <title>Human ISG15 conjugation targets both IFN-induced and constitutively expressed proteins functioning in diverse cellular pathways.</title>
        <authorList>
            <person name="Zhao C."/>
            <person name="Denison C."/>
            <person name="Huibregtse J.M."/>
            <person name="Gygi S.P."/>
            <person name="Krug R.M."/>
        </authorList>
    </citation>
    <scope>FUNCTION IN IFIT1; RIGI AND MX1 ISGYLATION</scope>
</reference>
<reference key="23">
    <citation type="journal article" date="2006" name="FEBS Lett.">
        <title>Negative regulation of protein phosphatase 2Cbeta by ISG15 conjugation.</title>
        <authorList>
            <person name="Takeuchi T."/>
            <person name="Kobayashi T."/>
            <person name="Tamura S."/>
            <person name="Yokosawa H."/>
        </authorList>
    </citation>
    <scope>FUNCTION IN PPM1B ISGYLATION</scope>
</reference>
<reference key="24">
    <citation type="journal article" date="2006" name="Proc. Natl. Acad. Sci. U.S.A.">
        <title>Innate antiviral response targets HIV-1 release by the induction of ubiquitin-like protein ISG15.</title>
        <authorList>
            <person name="Okumura A."/>
            <person name="Lu G."/>
            <person name="Pitha-Rowe I."/>
            <person name="Pitha P.M."/>
        </authorList>
    </citation>
    <scope>FUNCTION IN HIV-1 RESTRICTION</scope>
</reference>
<reference key="25">
    <citation type="journal article" date="2008" name="J. Biol. Chem.">
        <title>Different roles for two ubiquitin-like domains of ISG15 in protein modification.</title>
        <authorList>
            <person name="Chang Y.G."/>
            <person name="Yan X.Z."/>
            <person name="Xie Y.Y."/>
            <person name="Gao X.C."/>
            <person name="Song A.X."/>
            <person name="Zhang D.E."/>
            <person name="Hu H.Y."/>
        </authorList>
    </citation>
    <scope>DOMAINS UBIQUITIN-LIKE 1 AND 2</scope>
</reference>
<reference key="26">
    <citation type="journal article" date="2008" name="J. Biol. Chem.">
        <title>Nitrosylation of ISG15 prevents the disulfide bond-mediated dimerization of ISG15 and contributes to effective ISGylation.</title>
        <authorList>
            <person name="Okumura F."/>
            <person name="Lenschow D.J."/>
            <person name="Zhang D.E."/>
        </authorList>
    </citation>
    <scope>S-NITROSYLATION AT CYS-78</scope>
</reference>
<reference key="27">
    <citation type="journal article" date="2008" name="Proc. Natl. Acad. Sci. U.S.A.">
        <title>ISG15 inhibits Ebola VP40 VLP budding in an L-domain-dependent manner by blocking Nedd4 ligase activity.</title>
        <authorList>
            <person name="Okumura A."/>
            <person name="Pitha P.M."/>
            <person name="Harty R.N."/>
        </authorList>
    </citation>
    <scope>FUNCTION IN EBOLA VIRUS RESTRICTION</scope>
    <scope>INTERACTION WITH NEDD4</scope>
</reference>
<reference key="28">
    <citation type="journal article" date="2009" name="EMBO Rep.">
        <title>ISG15 modification of filamin B negatively regulates the type I interferon-induced JNK signalling pathway.</title>
        <authorList>
            <person name="Jeon Y.J."/>
            <person name="Choi J.S."/>
            <person name="Lee J.Y."/>
            <person name="Yu K.R."/>
            <person name="Kim S.M."/>
            <person name="Ka S.H."/>
            <person name="Oh K.H."/>
            <person name="Kim K.I."/>
            <person name="Zhang D.E."/>
            <person name="Bang O.S."/>
            <person name="Chung C.H."/>
        </authorList>
    </citation>
    <scope>FUNCTION IN FLNB ISGYLATION</scope>
</reference>
<reference key="29">
    <citation type="journal article" date="2009" name="J. Innate Immun.">
        <title>Antiviral activity of innate immune protein ISG15.</title>
        <authorList>
            <person name="Harty R.N."/>
            <person name="Pitha P.M."/>
            <person name="Okumura A."/>
        </authorList>
    </citation>
    <scope>REVIEW</scope>
</reference>
<reference key="30">
    <citation type="journal article" date="2009" name="J. Virol.">
        <title>Interferon-induced ISG15 conjugation inhibits influenza A virus gene expression and replication in human cells.</title>
        <authorList>
            <person name="Hsiang T.Y."/>
            <person name="Zhao C."/>
            <person name="Krug R.M."/>
        </authorList>
    </citation>
    <scope>FUNCTION IN INFLUENZA A VIRUS RESTRICTION</scope>
</reference>
<reference key="31">
    <citation type="journal article" date="2010" name="Biochim. Biophys. Acta">
        <title>ISG15 and immune diseases.</title>
        <authorList>
            <person name="Jeon Y.J."/>
            <person name="Yoo H.M."/>
            <person name="Chung C.H."/>
        </authorList>
    </citation>
    <scope>REVIEW</scope>
</reference>
<reference key="32">
    <citation type="journal article" date="2010" name="Cell">
        <title>Emerging role of ISG15 in antiviral immunity.</title>
        <authorList>
            <person name="Skaug B."/>
            <person name="Chen Z.J."/>
        </authorList>
    </citation>
    <scope>REVIEW</scope>
</reference>
<reference key="33">
    <citation type="journal article" date="2010" name="Gut">
        <title>The interferon stimulated gene 15 functions as a proviral factor for the hepatitis C virus and as a regulator of the IFN response.</title>
        <authorList>
            <person name="Broering R."/>
            <person name="Zhang X."/>
            <person name="Kottilil S."/>
            <person name="Trippler M."/>
            <person name="Jiang M."/>
            <person name="Lu M."/>
            <person name="Gerken G."/>
            <person name="Schlaak J.F."/>
        </authorList>
    </citation>
    <scope>FUNCTION</scope>
</reference>
<reference key="34">
    <citation type="journal article" date="2010" name="Mol. Cell. Biol.">
        <title>Positive regulation of interferon regulatory factor 3 activation by Herc5 via ISG15 modification.</title>
        <authorList>
            <person name="Shi H.X."/>
            <person name="Yang K."/>
            <person name="Liu X."/>
            <person name="Liu X.Y."/>
            <person name="Wei B."/>
            <person name="Shan Y.F."/>
            <person name="Zhu L.H."/>
            <person name="Wang C."/>
        </authorList>
    </citation>
    <scope>FUNCTION IN IRF3 ISGYLATION</scope>
</reference>
<reference key="35">
    <citation type="journal article" date="2010" name="Proc. Natl. Acad. Sci. U.S.A.">
        <title>ISG15 conjugation system targets the viral NS1 protein in influenza A virus-infected cells.</title>
        <authorList>
            <person name="Zhao C."/>
            <person name="Hsiang T.Y."/>
            <person name="Kuo R.L."/>
            <person name="Krug R.M."/>
        </authorList>
    </citation>
    <scope>FUNCTION IN INFLUENZA A VIRUS NS1 ISGYLATION</scope>
</reference>
<reference key="36">
    <citation type="journal article" date="2010" name="Viruses">
        <title>Antiviral properties of ISG15.</title>
        <authorList>
            <person name="Lenschow D.J."/>
        </authorList>
    </citation>
    <scope>REVIEW</scope>
</reference>
<reference key="37">
    <citation type="journal article" date="2011" name="BMC Syst. Biol.">
        <title>Initial characterization of the human central proteome.</title>
        <authorList>
            <person name="Burkard T.R."/>
            <person name="Planyavsky M."/>
            <person name="Kaupe I."/>
            <person name="Breitwieser F.P."/>
            <person name="Buerckstuemmer T."/>
            <person name="Bennett K.L."/>
            <person name="Superti-Furga G."/>
            <person name="Colinge J."/>
        </authorList>
    </citation>
    <scope>IDENTIFICATION BY MASS SPECTROMETRY [LARGE SCALE ANALYSIS]</scope>
</reference>
<reference key="38">
    <citation type="journal article" date="2011" name="J. Interferon Cytokine Res.">
        <title>Interferon-stimulated gene 15 and the protein ISGylation system.</title>
        <authorList>
            <person name="Zhang D."/>
            <person name="Zhang D.E."/>
        </authorList>
    </citation>
    <scope>REVIEW</scope>
</reference>
<reference key="39">
    <citation type="journal article" date="2011" name="J. Virol.">
        <title>Mechanism of inhibition of retrovirus release from cells by interferon-induced gene ISG15.</title>
        <authorList>
            <person name="Kuang Z."/>
            <person name="Seo E.J."/>
            <person name="Leis J."/>
        </authorList>
    </citation>
    <scope>FUNCTION IN CHMP5; CHMP2A; CHMP4B AND CHMP6 ISGYLATION</scope>
</reference>
<reference key="40">
    <citation type="journal article" date="2011" name="Proc. Natl. Acad. Sci. U.S.A.">
        <title>Molecular basis for ubiquitin and ISG15 cross-reactivity in viral ovarian tumor domains.</title>
        <authorList>
            <person name="Akutsu M."/>
            <person name="Ye Y."/>
            <person name="Virdee S."/>
            <person name="Chin J.W."/>
            <person name="Komander D."/>
        </authorList>
    </citation>
    <scope>INTERACTION WITH CRIMEAN-CONGO HEMORRHAGIC FEVER VIRUS RNA-DIRECTED RNA POLYMERASE L (MICROBIAL INFECTION)</scope>
</reference>
<reference key="41">
    <citation type="journal article" date="2011" name="Proc. Natl. Acad. Sci. U.S.A.">
        <title>Structural basis for the removal of ubiquitin and interferon-stimulated gene 15 by a viral ovarian tumor domain-containing protease.</title>
        <authorList>
            <person name="James T.W."/>
            <person name="Frias-Staheli N."/>
            <person name="Bacik J.P."/>
            <person name="Levingston Macleod J.M."/>
            <person name="Khajehpour M."/>
            <person name="Garcia-Sastre A."/>
            <person name="Mark B.L."/>
        </authorList>
    </citation>
    <scope>INTERACTION WITH CRIMEAN-CONGO HEMORRHAGIC FEVER VIRUS RNA-DIRECTED RNA POLYMERASE L (MICROBIAL INFECTION)</scope>
</reference>
<reference key="42">
    <citation type="journal article" date="2012" name="Adv. Virol.">
        <title>Budding of enveloped viruses: interferon-induced ISG15-antivirus mechanisms targeting the release process.</title>
        <authorList>
            <person name="Seo E.J."/>
            <person name="Leis J."/>
        </authorList>
    </citation>
    <scope>REVIEW</scope>
</reference>
<reference key="43">
    <citation type="journal article" date="2012" name="Cytokine Growth Factor Rev.">
        <title>IFNs, ISGylation and cancer: Cui prodest?</title>
        <authorList>
            <person name="Sgorbissa A."/>
            <person name="Brancolini C."/>
        </authorList>
    </citation>
    <scope>REVIEW</scope>
</reference>
<reference key="44">
    <citation type="journal article" date="2012" name="PLoS ONE">
        <title>Covalent protein modification with ISG15 via a conserved cysteine in the hinge region.</title>
        <authorList>
            <person name="Bade V.N."/>
            <person name="Nickels J."/>
            <person name="Keusekotten K."/>
            <person name="Praefcke G.J."/>
        </authorList>
    </citation>
    <scope>FUNCTION IN UBE2N AND UBA7 ISGYLATION</scope>
    <scope>DISULFIDE BOND</scope>
</reference>
<reference key="45">
    <citation type="journal article" date="2012" name="Science">
        <title>Mycobacterial disease and impaired IFN-gamma immunity in humans with inherited ISG15 deficiency.</title>
        <authorList>
            <person name="Bogunovic D."/>
            <person name="Byun M."/>
            <person name="Durfee L.A."/>
            <person name="Abhyankar A."/>
            <person name="Sanal O."/>
            <person name="Mansouri D."/>
            <person name="Salem S."/>
            <person name="Radovanovic I."/>
            <person name="Grant A.V."/>
            <person name="Adimi P."/>
            <person name="Mansouri N."/>
            <person name="Okada S."/>
            <person name="Bryant V.L."/>
            <person name="Kong X.F."/>
            <person name="Kreins A."/>
            <person name="Velez M.M."/>
            <person name="Boisson B."/>
            <person name="Khalilzadeh S."/>
            <person name="Ozcelik U."/>
            <person name="Darazam I.A."/>
            <person name="Schoggins J.W."/>
            <person name="Rice C.M."/>
            <person name="Al-Muhsen S."/>
            <person name="Behr M."/>
            <person name="Vogt G."/>
            <person name="Puel A."/>
            <person name="Bustamante J."/>
            <person name="Gros P."/>
            <person name="Huibregtse J.M."/>
            <person name="Abel L."/>
            <person name="Boisson-Dupuis S."/>
            <person name="Casanova J.L."/>
        </authorList>
    </citation>
    <scope>FUNCTION</scope>
    <scope>INDUCTION</scope>
    <scope>TISSUE SPECIFICITY</scope>
    <scope>SUBCELLULAR LOCATION</scope>
    <scope>INVOLVEMENT IN IMD38</scope>
</reference>
<reference key="46">
    <citation type="journal article" date="2013" name="Cell Res.">
        <title>ISG15 regulates IFN-? immunity in human mycobacterial disease.</title>
        <authorList>
            <person name="Fan J.B."/>
            <person name="Zhang D.E."/>
        </authorList>
    </citation>
    <scope>REVIEW</scope>
</reference>
<reference key="47">
    <citation type="journal article" date="2013" name="Exp. Mol. Med.">
        <title>ISG15: leading a double life as a secreted molecule.</title>
        <authorList>
            <person name="Bogunovic D."/>
            <person name="Boisson-Dupuis S."/>
            <person name="Casanova J.L."/>
        </authorList>
    </citation>
    <scope>REVIEW</scope>
</reference>
<reference key="48">
    <citation type="journal article" date="2013" name="J. Biol. Chem.">
        <title>Activation of double-stranded RNA-activated protein kinase (PKR) by interferon-stimulated gene 15 (ISG15) modification down-regulates protein translation.</title>
        <authorList>
            <person name="Okumura F."/>
            <person name="Okumura A.J."/>
            <person name="Uematsu K."/>
            <person name="Hatakeyama S."/>
            <person name="Zhang D.E."/>
            <person name="Kamura T."/>
        </authorList>
    </citation>
    <scope>FUNCTION IN EIF2AK2 ISGYLATION</scope>
</reference>
<reference key="49">
    <citation type="journal article" date="2013" name="Trends Microbiol.">
        <title>Interferon-induced ISG15 pathway: an ongoing virus-host battle.</title>
        <authorList>
            <person name="Zhao C."/>
            <person name="Collins M.N."/>
            <person name="Hsiang T.Y."/>
            <person name="Krug R.M."/>
        </authorList>
    </citation>
    <scope>REVIEW</scope>
</reference>
<reference key="50">
    <citation type="journal article" date="2014" name="J. Proteomics">
        <title>An enzyme assisted RP-RPLC approach for in-depth analysis of human liver phosphoproteome.</title>
        <authorList>
            <person name="Bian Y."/>
            <person name="Song C."/>
            <person name="Cheng K."/>
            <person name="Dong M."/>
            <person name="Wang F."/>
            <person name="Huang J."/>
            <person name="Sun D."/>
            <person name="Wang L."/>
            <person name="Ye M."/>
            <person name="Zou H."/>
        </authorList>
    </citation>
    <scope>IDENTIFICATION BY MASS SPECTROMETRY [LARGE SCALE ANALYSIS]</scope>
    <source>
        <tissue>Liver</tissue>
    </source>
</reference>
<reference key="51">
    <citation type="journal article" date="2014" name="J. Virol.">
        <title>ISG15 is counteracted by vaccinia virus E3 protein and controls the proinflammatory response against viral infection.</title>
        <authorList>
            <person name="Eduardo-Correia B."/>
            <person name="Martinez-Romero C."/>
            <person name="Garcia-Sastre A."/>
            <person name="Guerra S."/>
        </authorList>
    </citation>
    <scope>INTERACTION WITH VACCINIA VIRUS PROTEIN E3</scope>
</reference>
<reference key="52">
    <citation type="journal article" date="2016" name="PLoS Pathog.">
        <title>Consecutive Inhibition of ISG15 Expression and ISGylation by Cytomegalovirus Regulators.</title>
        <authorList>
            <person name="Kim Y.J."/>
            <person name="Kim E.T."/>
            <person name="Kim Y.E."/>
            <person name="Lee M.K."/>
            <person name="Kwon K.M."/>
            <person name="Kim K.I."/>
            <person name="Stamminger T."/>
            <person name="Ahn J.H."/>
        </authorList>
    </citation>
    <scope>FUNCTION</scope>
    <scope>INTERACTION WITH HUMAN CYTOMEGALOVIRUS PROTEIN UL26 (MICROBIAL INFECTION)</scope>
</reference>
<reference key="53">
    <citation type="journal article" date="2017" name="Mol. Cell">
        <title>Extracellular ISG15 signals cytokine secretion through the LFA-1 integrin receptor.</title>
        <authorList>
            <person name="Swaim C.D."/>
            <person name="Scott A.F."/>
            <person name="Canadeo L.A."/>
            <person name="Huibregtse J.M."/>
        </authorList>
    </citation>
    <scope>FUNCTION</scope>
    <scope>MUTAGENESIS OF ARG-44; SER-83; TYR-96; ARG-99; THR-101; GLN-102 AND THR-103</scope>
</reference>
<reference key="54">
    <citation type="journal article" date="2021" name="Nat. Microbiol.">
        <title>ISG15-dependent activation of the sensor MDA5 is antagonized by the SARS-CoV-2 papain-like protease to evade host innate immunity.</title>
        <authorList>
            <person name="Liu G."/>
            <person name="Lee J.H."/>
            <person name="Parker Z.M."/>
            <person name="Acharya D."/>
            <person name="Chiang J.J."/>
            <person name="van Gent M."/>
            <person name="Riedl W."/>
            <person name="Davis-Gardner M.E."/>
            <person name="Wies E."/>
            <person name="Chiang C."/>
            <person name="Gack M.U."/>
        </authorList>
    </citation>
    <scope>FUNCTION</scope>
</reference>
<reference key="55">
    <citation type="journal article" date="2024" name="Bone Res.">
        <title>IRF1-mediated upregulation of PARP12 promotes cartilage degradation by inhibiting PINK1/Parkin dependent mitophagy through ISG15 attenuating ubiquitylation and SUMOylation of MFN1/2.</title>
        <authorList>
            <person name="Deng Z."/>
            <person name="Long D."/>
            <person name="Li C."/>
            <person name="Liu H."/>
            <person name="Li W."/>
            <person name="Zhong Y."/>
            <person name="Mo X."/>
            <person name="Li R."/>
            <person name="Yang Z."/>
            <person name="Kang Y."/>
            <person name="Mao G."/>
        </authorList>
    </citation>
    <scope>INTERACTION WITH PARP12</scope>
    <scope>SUBCELLULAR LOCATION</scope>
    <scope>FUNCTION</scope>
</reference>
<reference key="56">
    <citation type="journal article" date="2005" name="J. Biol. Chem.">
        <title>Crystal structure of the interferon-induced ubiquitin-like protein ISG15.</title>
        <authorList>
            <person name="Narasimhan J."/>
            <person name="Wang M."/>
            <person name="Fu Z."/>
            <person name="Klein J.M."/>
            <person name="Haas A.L."/>
            <person name="Kim J.J."/>
        </authorList>
    </citation>
    <scope>X-RAY CRYSTALLOGRAPHY (2.5 ANGSTROMS) OF 1-155 OF MUTANT SER-78</scope>
</reference>
<reference key="57">
    <citation type="submission" date="2009-02" db="PDB data bank">
        <title>Solution NMR structure of the C-terminal domain of the interferon alpha-inducible ISG15 protein from Homo sapiens.</title>
        <authorList>
            <consortium name="Northeast structural genomics consortium (NESG)"/>
        </authorList>
    </citation>
    <scope>STRUCTURE BY NMR OF 79-157</scope>
</reference>
<protein>
    <recommendedName>
        <fullName>Ubiquitin-like protein ISG15</fullName>
    </recommendedName>
    <alternativeName>
        <fullName>Interferon-induced 15 kDa protein</fullName>
    </alternativeName>
    <alternativeName>
        <fullName>Interferon-induced 17 kDa protein</fullName>
        <shortName>IP17</shortName>
    </alternativeName>
    <alternativeName>
        <fullName>Ubiquitin cross-reactive protein</fullName>
        <shortName>hUCRP</shortName>
    </alternativeName>
</protein>
<dbReference type="EMBL" id="M13755">
    <property type="protein sequence ID" value="AAA36038.1"/>
    <property type="molecule type" value="mRNA"/>
</dbReference>
<dbReference type="EMBL" id="M21786">
    <property type="protein sequence ID" value="AAA36128.1"/>
    <property type="molecule type" value="Genomic_DNA"/>
</dbReference>
<dbReference type="EMBL" id="AY168648">
    <property type="protein sequence ID" value="AAN86983.1"/>
    <property type="molecule type" value="mRNA"/>
</dbReference>
<dbReference type="EMBL" id="BT007297">
    <property type="protein sequence ID" value="AAP35961.1"/>
    <property type="molecule type" value="mRNA"/>
</dbReference>
<dbReference type="EMBL" id="AL645608">
    <property type="status" value="NOT_ANNOTATED_CDS"/>
    <property type="molecule type" value="Genomic_DNA"/>
</dbReference>
<dbReference type="EMBL" id="CH471183">
    <property type="protein sequence ID" value="EAW56295.1"/>
    <property type="molecule type" value="Genomic_DNA"/>
</dbReference>
<dbReference type="EMBL" id="BC009507">
    <property type="protein sequence ID" value="AAH09507.1"/>
    <property type="molecule type" value="mRNA"/>
</dbReference>
<dbReference type="CCDS" id="CCDS6.1"/>
<dbReference type="PIR" id="A28304">
    <property type="entry name" value="A28138"/>
</dbReference>
<dbReference type="RefSeq" id="NP_005092.1">
    <property type="nucleotide sequence ID" value="NM_005101.4"/>
</dbReference>
<dbReference type="PDB" id="1Z2M">
    <property type="method" value="X-ray"/>
    <property type="resolution" value="2.50 A"/>
    <property type="chains" value="A=1-155"/>
</dbReference>
<dbReference type="PDB" id="2HJ8">
    <property type="method" value="NMR"/>
    <property type="chains" value="A=79-157"/>
</dbReference>
<dbReference type="PDB" id="3PHX">
    <property type="method" value="X-ray"/>
    <property type="resolution" value="1.60 A"/>
    <property type="chains" value="B=79-156"/>
</dbReference>
<dbReference type="PDB" id="3PSE">
    <property type="method" value="X-ray"/>
    <property type="resolution" value="2.30 A"/>
    <property type="chains" value="B=1-156"/>
</dbReference>
<dbReference type="PDB" id="3R66">
    <property type="method" value="X-ray"/>
    <property type="resolution" value="2.30 A"/>
    <property type="chains" value="C/D=1-157"/>
</dbReference>
<dbReference type="PDB" id="3RT3">
    <property type="method" value="X-ray"/>
    <property type="resolution" value="2.01 A"/>
    <property type="chains" value="B=1-158"/>
</dbReference>
<dbReference type="PDB" id="3SDL">
    <property type="method" value="X-ray"/>
    <property type="resolution" value="2.29 A"/>
    <property type="chains" value="C/D=1-157"/>
</dbReference>
<dbReference type="PDB" id="5TL6">
    <property type="method" value="X-ray"/>
    <property type="resolution" value="2.62 A"/>
    <property type="chains" value="A/C=80-157"/>
</dbReference>
<dbReference type="PDB" id="5W8T">
    <property type="method" value="X-ray"/>
    <property type="resolution" value="2.76 A"/>
    <property type="chains" value="B/D=80-156"/>
</dbReference>
<dbReference type="PDB" id="5W8U">
    <property type="method" value="X-ray"/>
    <property type="resolution" value="2.41 A"/>
    <property type="chains" value="B/D=80-156"/>
</dbReference>
<dbReference type="PDB" id="6BI8">
    <property type="method" value="X-ray"/>
    <property type="resolution" value="3.00 A"/>
    <property type="chains" value="C/D=1-156"/>
</dbReference>
<dbReference type="PDB" id="6FFA">
    <property type="method" value="X-ray"/>
    <property type="resolution" value="1.50 A"/>
    <property type="chains" value="B=79-155"/>
</dbReference>
<dbReference type="PDB" id="6XA9">
    <property type="method" value="X-ray"/>
    <property type="resolution" value="2.90 A"/>
    <property type="chains" value="B/D/F=79-157"/>
</dbReference>
<dbReference type="PDB" id="7RBS">
    <property type="method" value="X-ray"/>
    <property type="resolution" value="2.98 A"/>
    <property type="chains" value="B/D/F/H/J=2-157"/>
</dbReference>
<dbReference type="PDB" id="7S6P">
    <property type="method" value="X-ray"/>
    <property type="resolution" value="2.15 A"/>
    <property type="chains" value="A/B/C/D/E/F=2-157"/>
</dbReference>
<dbReference type="PDB" id="8OIF">
    <property type="method" value="EM"/>
    <property type="resolution" value="3.50 A"/>
    <property type="chains" value="I=1-157"/>
</dbReference>
<dbReference type="PDB" id="8SE9">
    <property type="method" value="EM"/>
    <property type="resolution" value="3.20 A"/>
    <property type="chains" value="B/D=1-157"/>
</dbReference>
<dbReference type="PDB" id="8SEA">
    <property type="method" value="EM"/>
    <property type="resolution" value="3.40 A"/>
    <property type="chains" value="B/D=1-157"/>
</dbReference>
<dbReference type="PDB" id="8SEB">
    <property type="method" value="EM"/>
    <property type="resolution" value="3.24 A"/>
    <property type="chains" value="B=1-157"/>
</dbReference>
<dbReference type="PDB" id="8SV8">
    <property type="method" value="EM"/>
    <property type="resolution" value="3.38 A"/>
    <property type="chains" value="B/D=1-157"/>
</dbReference>
<dbReference type="PDBsum" id="1Z2M"/>
<dbReference type="PDBsum" id="2HJ8"/>
<dbReference type="PDBsum" id="3PHX"/>
<dbReference type="PDBsum" id="3PSE"/>
<dbReference type="PDBsum" id="3R66"/>
<dbReference type="PDBsum" id="3RT3"/>
<dbReference type="PDBsum" id="3SDL"/>
<dbReference type="PDBsum" id="5TL6"/>
<dbReference type="PDBsum" id="5W8T"/>
<dbReference type="PDBsum" id="5W8U"/>
<dbReference type="PDBsum" id="6BI8"/>
<dbReference type="PDBsum" id="6FFA"/>
<dbReference type="PDBsum" id="6XA9"/>
<dbReference type="PDBsum" id="7RBS"/>
<dbReference type="PDBsum" id="7S6P"/>
<dbReference type="PDBsum" id="8OIF"/>
<dbReference type="PDBsum" id="8SE9"/>
<dbReference type="PDBsum" id="8SEA"/>
<dbReference type="PDBsum" id="8SEB"/>
<dbReference type="PDBsum" id="8SV8"/>
<dbReference type="BMRB" id="P05161"/>
<dbReference type="EMDB" id="EMD-16891"/>
<dbReference type="EMDB" id="EMD-18589"/>
<dbReference type="EMDB" id="EMD-40407"/>
<dbReference type="EMDB" id="EMD-40408"/>
<dbReference type="EMDB" id="EMD-40409"/>
<dbReference type="EMDB" id="EMD-40782"/>
<dbReference type="SMR" id="P05161"/>
<dbReference type="BioGRID" id="114995">
    <property type="interactions" value="491"/>
</dbReference>
<dbReference type="DIP" id="DIP-29814N"/>
<dbReference type="FunCoup" id="P05161">
    <property type="interactions" value="780"/>
</dbReference>
<dbReference type="IntAct" id="P05161">
    <property type="interactions" value="71"/>
</dbReference>
<dbReference type="MINT" id="P05161"/>
<dbReference type="STRING" id="9606.ENSP00000496832"/>
<dbReference type="GlyGen" id="P05161">
    <property type="glycosylation" value="1 site, 1 O-linked glycan (1 site)"/>
</dbReference>
<dbReference type="iPTMnet" id="P05161"/>
<dbReference type="PhosphoSitePlus" id="P05161"/>
<dbReference type="BioMuta" id="ISG15"/>
<dbReference type="DMDM" id="52001470"/>
<dbReference type="jPOST" id="P05161"/>
<dbReference type="MassIVE" id="P05161"/>
<dbReference type="PaxDb" id="9606-ENSP00000368699"/>
<dbReference type="PeptideAtlas" id="P05161"/>
<dbReference type="ProteomicsDB" id="51809"/>
<dbReference type="Pumba" id="P05161"/>
<dbReference type="TopDownProteomics" id="P05161"/>
<dbReference type="Antibodypedia" id="809">
    <property type="antibodies" value="565 antibodies from 40 providers"/>
</dbReference>
<dbReference type="DNASU" id="9636"/>
<dbReference type="Ensembl" id="ENST00000649529.1">
    <property type="protein sequence ID" value="ENSP00000496832.1"/>
    <property type="gene ID" value="ENSG00000187608.10"/>
</dbReference>
<dbReference type="GeneID" id="9636"/>
<dbReference type="KEGG" id="hsa:9636"/>
<dbReference type="MANE-Select" id="ENST00000649529.1">
    <property type="protein sequence ID" value="ENSP00000496832.1"/>
    <property type="RefSeq nucleotide sequence ID" value="NM_005101.4"/>
    <property type="RefSeq protein sequence ID" value="NP_005092.1"/>
</dbReference>
<dbReference type="UCSC" id="uc001acj.5">
    <property type="organism name" value="human"/>
</dbReference>
<dbReference type="AGR" id="HGNC:4053"/>
<dbReference type="CTD" id="9636"/>
<dbReference type="DisGeNET" id="9636"/>
<dbReference type="GeneCards" id="ISG15"/>
<dbReference type="HGNC" id="HGNC:4053">
    <property type="gene designation" value="ISG15"/>
</dbReference>
<dbReference type="HPA" id="ENSG00000187608">
    <property type="expression patterns" value="Tissue enhanced (salivary)"/>
</dbReference>
<dbReference type="MalaCards" id="ISG15"/>
<dbReference type="MIM" id="147571">
    <property type="type" value="gene"/>
</dbReference>
<dbReference type="MIM" id="616126">
    <property type="type" value="phenotype"/>
</dbReference>
<dbReference type="neXtProt" id="NX_P05161"/>
<dbReference type="OpenTargets" id="ENSG00000187608"/>
<dbReference type="Orphanet" id="319563">
    <property type="disease" value="Mendelian susceptibility to mycobacterial diseases due to complete ISG15 deficiency"/>
</dbReference>
<dbReference type="PharmGKB" id="PA28465"/>
<dbReference type="VEuPathDB" id="HostDB:ENSG00000187608"/>
<dbReference type="eggNOG" id="KOG0001">
    <property type="taxonomic scope" value="Eukaryota"/>
</dbReference>
<dbReference type="GeneTree" id="ENSGT00940000162007"/>
<dbReference type="InParanoid" id="P05161"/>
<dbReference type="OMA" id="CTVYMNL"/>
<dbReference type="OrthoDB" id="1885901at2759"/>
<dbReference type="PAN-GO" id="P05161">
    <property type="GO annotations" value="8 GO annotations based on evolutionary models"/>
</dbReference>
<dbReference type="PhylomeDB" id="P05161"/>
<dbReference type="TreeFam" id="TF338379"/>
<dbReference type="PathwayCommons" id="P05161"/>
<dbReference type="Reactome" id="R-HSA-1169408">
    <property type="pathway name" value="ISG15 antiviral mechanism"/>
</dbReference>
<dbReference type="Reactome" id="R-HSA-168276">
    <property type="pathway name" value="NS1 Mediated Effects on Host Pathways"/>
</dbReference>
<dbReference type="Reactome" id="R-HSA-168928">
    <property type="pathway name" value="DDX58/IFIH1-mediated induction of interferon-alpha/beta"/>
</dbReference>
<dbReference type="Reactome" id="R-HSA-5656169">
    <property type="pathway name" value="Termination of translesion DNA synthesis"/>
</dbReference>
<dbReference type="Reactome" id="R-HSA-909733">
    <property type="pathway name" value="Interferon alpha/beta signaling"/>
</dbReference>
<dbReference type="Reactome" id="R-HSA-936440">
    <property type="pathway name" value="Negative regulators of DDX58/IFIH1 signaling"/>
</dbReference>
<dbReference type="Reactome" id="R-HSA-9705671">
    <property type="pathway name" value="SARS-CoV-2 activates/modulates innate and adaptive immune responses"/>
</dbReference>
<dbReference type="Reactome" id="R-HSA-9833110">
    <property type="pathway name" value="RSV-host interactions"/>
</dbReference>
<dbReference type="Reactome" id="R-HSA-9833482">
    <property type="pathway name" value="PKR-mediated signaling"/>
</dbReference>
<dbReference type="Reactome" id="R-HSA-9909505">
    <property type="pathway name" value="Modulation of host responses by IFN-stimulated genes"/>
</dbReference>
<dbReference type="SignaLink" id="P05161"/>
<dbReference type="BioGRID-ORCS" id="9636">
    <property type="hits" value="26 hits in 1168 CRISPR screens"/>
</dbReference>
<dbReference type="ChiTaRS" id="ISG15">
    <property type="organism name" value="human"/>
</dbReference>
<dbReference type="EvolutionaryTrace" id="P05161"/>
<dbReference type="GeneWiki" id="ISG15"/>
<dbReference type="GenomeRNAi" id="9636"/>
<dbReference type="Pharos" id="P05161">
    <property type="development level" value="Tbio"/>
</dbReference>
<dbReference type="PRO" id="PR:P05161"/>
<dbReference type="Proteomes" id="UP000005640">
    <property type="component" value="Chromosome 1"/>
</dbReference>
<dbReference type="RNAct" id="P05161">
    <property type="molecule type" value="protein"/>
</dbReference>
<dbReference type="Bgee" id="ENSG00000187608">
    <property type="expression patterns" value="Expressed in decidua and 206 other cell types or tissues"/>
</dbReference>
<dbReference type="ExpressionAtlas" id="P05161">
    <property type="expression patterns" value="baseline and differential"/>
</dbReference>
<dbReference type="GO" id="GO:0005737">
    <property type="term" value="C:cytoplasm"/>
    <property type="evidence" value="ECO:0000318"/>
    <property type="project" value="GO_Central"/>
</dbReference>
<dbReference type="GO" id="GO:0005829">
    <property type="term" value="C:cytosol"/>
    <property type="evidence" value="ECO:0000304"/>
    <property type="project" value="Reactome"/>
</dbReference>
<dbReference type="GO" id="GO:0005576">
    <property type="term" value="C:extracellular region"/>
    <property type="evidence" value="ECO:0000314"/>
    <property type="project" value="UniProtKB"/>
</dbReference>
<dbReference type="GO" id="GO:0005654">
    <property type="term" value="C:nucleoplasm"/>
    <property type="evidence" value="ECO:0000304"/>
    <property type="project" value="Reactome"/>
</dbReference>
<dbReference type="GO" id="GO:0005634">
    <property type="term" value="C:nucleus"/>
    <property type="evidence" value="ECO:0000318"/>
    <property type="project" value="GO_Central"/>
</dbReference>
<dbReference type="GO" id="GO:0005178">
    <property type="term" value="F:integrin binding"/>
    <property type="evidence" value="ECO:0000353"/>
    <property type="project" value="UniProtKB"/>
</dbReference>
<dbReference type="GO" id="GO:0031386">
    <property type="term" value="F:protein tag activity"/>
    <property type="evidence" value="ECO:0000314"/>
    <property type="project" value="UniProt"/>
</dbReference>
<dbReference type="GO" id="GO:0031625">
    <property type="term" value="F:ubiquitin protein ligase binding"/>
    <property type="evidence" value="ECO:0000318"/>
    <property type="project" value="GO_Central"/>
</dbReference>
<dbReference type="GO" id="GO:0042742">
    <property type="term" value="P:defense response to bacterium"/>
    <property type="evidence" value="ECO:0000315"/>
    <property type="project" value="UniProtKB"/>
</dbReference>
<dbReference type="GO" id="GO:0051607">
    <property type="term" value="P:defense response to virus"/>
    <property type="evidence" value="ECO:0000314"/>
    <property type="project" value="UniProtKB"/>
</dbReference>
<dbReference type="GO" id="GO:0045087">
    <property type="term" value="P:innate immune response"/>
    <property type="evidence" value="ECO:0000314"/>
    <property type="project" value="UniProt"/>
</dbReference>
<dbReference type="GO" id="GO:0007229">
    <property type="term" value="P:integrin-mediated signaling pathway"/>
    <property type="evidence" value="ECO:0000314"/>
    <property type="project" value="UniProtKB"/>
</dbReference>
<dbReference type="GO" id="GO:0032020">
    <property type="term" value="P:ISG15-protein conjugation"/>
    <property type="evidence" value="ECO:0000314"/>
    <property type="project" value="UniProtKB"/>
</dbReference>
<dbReference type="GO" id="GO:0019941">
    <property type="term" value="P:modification-dependent protein catabolic process"/>
    <property type="evidence" value="ECO:0000318"/>
    <property type="project" value="GO_Central"/>
</dbReference>
<dbReference type="GO" id="GO:0031397">
    <property type="term" value="P:negative regulation of protein ubiquitination"/>
    <property type="evidence" value="ECO:0000314"/>
    <property type="project" value="UniProtKB"/>
</dbReference>
<dbReference type="GO" id="GO:0060339">
    <property type="term" value="P:negative regulation of type I interferon-mediated signaling pathway"/>
    <property type="evidence" value="ECO:0000315"/>
    <property type="project" value="ARUK-UCL"/>
</dbReference>
<dbReference type="GO" id="GO:0045071">
    <property type="term" value="P:negative regulation of viral genome replication"/>
    <property type="evidence" value="ECO:0000314"/>
    <property type="project" value="UniProtKB"/>
</dbReference>
<dbReference type="GO" id="GO:0030501">
    <property type="term" value="P:positive regulation of bone mineralization"/>
    <property type="evidence" value="ECO:0000250"/>
    <property type="project" value="UniProtKB"/>
</dbReference>
<dbReference type="GO" id="GO:0045648">
    <property type="term" value="P:positive regulation of erythrocyte differentiation"/>
    <property type="evidence" value="ECO:0007669"/>
    <property type="project" value="Ensembl"/>
</dbReference>
<dbReference type="GO" id="GO:0032728">
    <property type="term" value="P:positive regulation of interferon-beta production"/>
    <property type="evidence" value="ECO:0000314"/>
    <property type="project" value="UniProtKB"/>
</dbReference>
<dbReference type="GO" id="GO:0032733">
    <property type="term" value="P:positive regulation of interleukin-10 production"/>
    <property type="evidence" value="ECO:0000314"/>
    <property type="project" value="UniProtKB"/>
</dbReference>
<dbReference type="GO" id="GO:0032461">
    <property type="term" value="P:positive regulation of protein oligomerization"/>
    <property type="evidence" value="ECO:0000314"/>
    <property type="project" value="UniProtKB"/>
</dbReference>
<dbReference type="GO" id="GO:0032729">
    <property type="term" value="P:positive regulation of type II interferon production"/>
    <property type="evidence" value="ECO:0000314"/>
    <property type="project" value="UniProtKB"/>
</dbReference>
<dbReference type="GO" id="GO:0070585">
    <property type="term" value="P:protein localization to mitochondrion"/>
    <property type="evidence" value="ECO:0000314"/>
    <property type="project" value="UniProtKB"/>
</dbReference>
<dbReference type="GO" id="GO:0032649">
    <property type="term" value="P:regulation of type II interferon production"/>
    <property type="evidence" value="ECO:0000315"/>
    <property type="project" value="UniProtKB"/>
</dbReference>
<dbReference type="GO" id="GO:0034340">
    <property type="term" value="P:response to type I interferon"/>
    <property type="evidence" value="ECO:0000314"/>
    <property type="project" value="UniProtKB"/>
</dbReference>
<dbReference type="GO" id="GO:0009615">
    <property type="term" value="P:response to virus"/>
    <property type="evidence" value="ECO:0000314"/>
    <property type="project" value="UniProtKB"/>
</dbReference>
<dbReference type="CDD" id="cd01792">
    <property type="entry name" value="Ubl1_ISG15"/>
    <property type="match status" value="1"/>
</dbReference>
<dbReference type="CDD" id="cd01810">
    <property type="entry name" value="Ubl2_ISG15"/>
    <property type="match status" value="1"/>
</dbReference>
<dbReference type="FunFam" id="3.10.20.90:FF:000240">
    <property type="entry name" value="ISG15 ubiquitin-like modifier"/>
    <property type="match status" value="1"/>
</dbReference>
<dbReference type="FunFam" id="3.10.20.90:FF:000264">
    <property type="entry name" value="ISG15 ubiquitin-like modifier"/>
    <property type="match status" value="1"/>
</dbReference>
<dbReference type="Gene3D" id="3.10.20.90">
    <property type="entry name" value="Phosphatidylinositol 3-kinase Catalytic Subunit, Chain A, domain 1"/>
    <property type="match status" value="2"/>
</dbReference>
<dbReference type="InterPro" id="IPR015496">
    <property type="entry name" value="Ubiquilin"/>
</dbReference>
<dbReference type="InterPro" id="IPR000626">
    <property type="entry name" value="Ubiquitin-like_dom"/>
</dbReference>
<dbReference type="InterPro" id="IPR029071">
    <property type="entry name" value="Ubiquitin-like_domsf"/>
</dbReference>
<dbReference type="InterPro" id="IPR019956">
    <property type="entry name" value="Ubiquitin_dom"/>
</dbReference>
<dbReference type="PANTHER" id="PTHR10677">
    <property type="entry name" value="UBIQUILIN"/>
    <property type="match status" value="1"/>
</dbReference>
<dbReference type="PANTHER" id="PTHR10677:SF16">
    <property type="entry name" value="UBIQUILIN-1"/>
    <property type="match status" value="1"/>
</dbReference>
<dbReference type="Pfam" id="PF00240">
    <property type="entry name" value="ubiquitin"/>
    <property type="match status" value="2"/>
</dbReference>
<dbReference type="PRINTS" id="PR00348">
    <property type="entry name" value="UBIQUITIN"/>
</dbReference>
<dbReference type="SMART" id="SM00213">
    <property type="entry name" value="UBQ"/>
    <property type="match status" value="2"/>
</dbReference>
<dbReference type="SUPFAM" id="SSF54236">
    <property type="entry name" value="Ubiquitin-like"/>
    <property type="match status" value="2"/>
</dbReference>
<dbReference type="PROSITE" id="PS50053">
    <property type="entry name" value="UBIQUITIN_2"/>
    <property type="match status" value="2"/>
</dbReference>
<evidence type="ECO:0000250" key="1"/>
<evidence type="ECO:0000255" key="2">
    <source>
        <dbReference type="PROSITE-ProRule" id="PRU00214"/>
    </source>
</evidence>
<evidence type="ECO:0000269" key="3">
    <source>
    </source>
</evidence>
<evidence type="ECO:0000269" key="4">
    <source>
    </source>
</evidence>
<evidence type="ECO:0000269" key="5">
    <source>
    </source>
</evidence>
<evidence type="ECO:0000269" key="6">
    <source>
    </source>
</evidence>
<evidence type="ECO:0000269" key="7">
    <source>
    </source>
</evidence>
<evidence type="ECO:0000269" key="8">
    <source>
    </source>
</evidence>
<evidence type="ECO:0000269" key="9">
    <source>
    </source>
</evidence>
<evidence type="ECO:0000269" key="10">
    <source>
    </source>
</evidence>
<evidence type="ECO:0000269" key="11">
    <source>
    </source>
</evidence>
<evidence type="ECO:0000269" key="12">
    <source>
    </source>
</evidence>
<evidence type="ECO:0000269" key="13">
    <source>
    </source>
</evidence>
<evidence type="ECO:0000269" key="14">
    <source>
    </source>
</evidence>
<evidence type="ECO:0000269" key="15">
    <source>
    </source>
</evidence>
<evidence type="ECO:0000269" key="16">
    <source>
    </source>
</evidence>
<evidence type="ECO:0000269" key="17">
    <source>
    </source>
</evidence>
<evidence type="ECO:0000269" key="18">
    <source>
    </source>
</evidence>
<evidence type="ECO:0000269" key="19">
    <source>
    </source>
</evidence>
<evidence type="ECO:0000269" key="20">
    <source>
    </source>
</evidence>
<evidence type="ECO:0000269" key="21">
    <source>
    </source>
</evidence>
<evidence type="ECO:0000269" key="22">
    <source>
    </source>
</evidence>
<evidence type="ECO:0000269" key="23">
    <source>
    </source>
</evidence>
<evidence type="ECO:0000269" key="24">
    <source>
    </source>
</evidence>
<evidence type="ECO:0000269" key="25">
    <source>
    </source>
</evidence>
<evidence type="ECO:0000269" key="26">
    <source>
    </source>
</evidence>
<evidence type="ECO:0000269" key="27">
    <source>
    </source>
</evidence>
<evidence type="ECO:0000269" key="28">
    <source>
    </source>
</evidence>
<evidence type="ECO:0000269" key="29">
    <source>
    </source>
</evidence>
<evidence type="ECO:0000269" key="30">
    <source>
    </source>
</evidence>
<evidence type="ECO:0000269" key="31">
    <source>
    </source>
</evidence>
<evidence type="ECO:0000269" key="32">
    <source>
    </source>
</evidence>
<evidence type="ECO:0000269" key="33">
    <source>
    </source>
</evidence>
<evidence type="ECO:0000269" key="34">
    <source>
    </source>
</evidence>
<evidence type="ECO:0000269" key="35">
    <source>
    </source>
</evidence>
<evidence type="ECO:0000269" key="36">
    <source>
    </source>
</evidence>
<evidence type="ECO:0000269" key="37">
    <source ref="5"/>
</evidence>
<evidence type="ECO:0000269" key="38">
    <source ref="6"/>
</evidence>
<evidence type="ECO:0000305" key="39"/>
<evidence type="ECO:0000312" key="40">
    <source>
        <dbReference type="HGNC" id="HGNC:4053"/>
    </source>
</evidence>
<evidence type="ECO:0007829" key="41">
    <source>
        <dbReference type="PDB" id="3RT3"/>
    </source>
</evidence>
<evidence type="ECO:0007829" key="42">
    <source>
        <dbReference type="PDB" id="5TL6"/>
    </source>
</evidence>
<evidence type="ECO:0007829" key="43">
    <source>
        <dbReference type="PDB" id="6BI8"/>
    </source>
</evidence>
<evidence type="ECO:0007829" key="44">
    <source>
        <dbReference type="PDB" id="6FFA"/>
    </source>
</evidence>
<evidence type="ECO:0007829" key="45">
    <source>
        <dbReference type="PDB" id="7S6P"/>
    </source>
</evidence>
<evidence type="ECO:0007829" key="46">
    <source>
        <dbReference type="PDB" id="8SEA"/>
    </source>
</evidence>
<evidence type="ECO:0007829" key="47">
    <source>
        <dbReference type="PDB" id="8SV8"/>
    </source>
</evidence>
<organism>
    <name type="scientific">Homo sapiens</name>
    <name type="common">Human</name>
    <dbReference type="NCBI Taxonomy" id="9606"/>
    <lineage>
        <taxon>Eukaryota</taxon>
        <taxon>Metazoa</taxon>
        <taxon>Chordata</taxon>
        <taxon>Craniata</taxon>
        <taxon>Vertebrata</taxon>
        <taxon>Euteleostomi</taxon>
        <taxon>Mammalia</taxon>
        <taxon>Eutheria</taxon>
        <taxon>Euarchontoglires</taxon>
        <taxon>Primates</taxon>
        <taxon>Haplorrhini</taxon>
        <taxon>Catarrhini</taxon>
        <taxon>Hominidae</taxon>
        <taxon>Homo</taxon>
    </lineage>
</organism>
<proteinExistence type="evidence at protein level"/>
<sequence length="165" mass="17888">MGWDLTVKMLAGNEFQVSLSSSMSVSELKAQITQKIGVHAFQQRLAVHPSGVALQDRVPLASQGLGPGSTVLLVVDKCDEPLSILVRNNKGRSSTYEVRLTQTVAHLKQQVSGLEGVQDDLFWLTFEGKPLEDQLPLGEYGLKPLSTVFMNLRLRGGGTEPGGRS</sequence>